<organismHost>
    <name type="scientific">Homo sapiens</name>
    <name type="common">Human</name>
    <dbReference type="NCBI Taxonomy" id="9606"/>
</organismHost>
<protein>
    <recommendedName>
        <fullName>Fiber protein</fullName>
        <shortName>SPIKE</shortName>
    </recommendedName>
    <alternativeName>
        <fullName>Protein IV</fullName>
    </alternativeName>
</protein>
<comment type="function">
    <text evidence="1">Forms spikes that protrude from each vertex of the icosahedral capsid. Interacts with host receptor CXCAR to provide virion initial attachment to target cell. Fiber proteins are shed during virus entry, when virus is still at the cell surface (By similarity).</text>
</comment>
<comment type="subunit">
    <text evidence="1">Homotrimer. Interacts with host receptor CXCAR. Interacts (via N-terminal tail region) with pentons (By similarity).</text>
</comment>
<comment type="subcellular location">
    <subcellularLocation>
        <location evidence="1">Virion</location>
    </subcellularLocation>
    <subcellularLocation>
        <location evidence="1">Host nucleus</location>
    </subcellularLocation>
    <text evidence="1">Anchored to the pentons, protrudes from the virion surface.</text>
</comment>
<comment type="induction">
    <text>Expressed in the late phase of the viral replicative cycle.</text>
</comment>
<comment type="domain">
    <text evidence="1">The tail region anchors the fiber to penton base capsomers, whereas the shaft, built from several repeated motifs, allows the knob to protrude from the virion.</text>
</comment>
<comment type="miscellaneous">
    <text evidence="1">All late proteins expressed from the major late promoter are produced by alternative splicing and alternative polyadenylation of the same gene giving rise to non-overlapping ORFs. A leader sequence is present in the N-terminus of all these mRNAs and is recognized by the viral shutoff protein to provide expression although conventional translation via ribosome scanning from the cap has been shut off in the host cell (By similarity).</text>
</comment>
<comment type="similarity">
    <text evidence="4">Belongs to the adenoviridae fiber family.</text>
</comment>
<feature type="chain" id="PRO_0000221795" description="Fiber protein">
    <location>
        <begin position="1"/>
        <end position="587"/>
    </location>
</feature>
<feature type="region of interest" description="Disordered" evidence="2">
    <location>
        <begin position="1"/>
        <end position="23"/>
    </location>
</feature>
<feature type="mutagenesis site" description="Loss of interaction with CXADR." evidence="3">
    <original>P</original>
    <variation>E</variation>
    <location>
        <position position="417"/>
    </location>
</feature>
<feature type="mutagenesis site" description="Loss of interaction with CXADR." evidence="3">
    <original>P</original>
    <variation>E</variation>
    <location>
        <position position="418"/>
    </location>
</feature>
<feature type="mutagenesis site" description="Loss of interaction with CXADR." evidence="3">
    <original>S</original>
    <variation>TIS</variation>
    <location>
        <position position="421"/>
    </location>
</feature>
<feature type="mutagenesis site" description="Loss of interaction with CXADR." evidence="3">
    <location>
        <position position="425"/>
    </location>
</feature>
<feature type="mutagenesis site" description="Loss of interaction with CXADR." evidence="3">
    <location>
        <position position="426"/>
    </location>
</feature>
<feature type="mutagenesis site" description="Loss of interaction with CXADR." evidence="3">
    <location>
        <position position="550"/>
    </location>
</feature>
<feature type="mutagenesis site" description="Loss of interaction with CXADR." evidence="3">
    <location>
        <position position="551"/>
    </location>
</feature>
<feature type="strand" evidence="5">
    <location>
        <begin position="405"/>
        <end position="412"/>
    </location>
</feature>
<feature type="strand" evidence="5">
    <location>
        <begin position="422"/>
        <end position="424"/>
    </location>
</feature>
<feature type="strand" evidence="5">
    <location>
        <begin position="428"/>
        <end position="437"/>
    </location>
</feature>
<feature type="strand" evidence="5">
    <location>
        <begin position="440"/>
        <end position="449"/>
    </location>
</feature>
<feature type="helix" evidence="5">
    <location>
        <begin position="452"/>
        <end position="455"/>
    </location>
</feature>
<feature type="strand" evidence="5">
    <location>
        <begin position="463"/>
        <end position="470"/>
    </location>
</feature>
<feature type="turn" evidence="6">
    <location>
        <begin position="472"/>
        <end position="474"/>
    </location>
</feature>
<feature type="strand" evidence="5">
    <location>
        <begin position="482"/>
        <end position="484"/>
    </location>
</feature>
<feature type="strand" evidence="5">
    <location>
        <begin position="491"/>
        <end position="494"/>
    </location>
</feature>
<feature type="helix" evidence="5">
    <location>
        <begin position="506"/>
        <end position="508"/>
    </location>
</feature>
<feature type="turn" evidence="5">
    <location>
        <begin position="513"/>
        <end position="515"/>
    </location>
</feature>
<feature type="helix" evidence="5">
    <location>
        <begin position="518"/>
        <end position="520"/>
    </location>
</feature>
<feature type="helix" evidence="5">
    <location>
        <begin position="524"/>
        <end position="526"/>
    </location>
</feature>
<feature type="strand" evidence="5">
    <location>
        <begin position="527"/>
        <end position="533"/>
    </location>
</feature>
<feature type="helix" evidence="5">
    <location>
        <begin position="534"/>
        <end position="536"/>
    </location>
</feature>
<feature type="strand" evidence="5">
    <location>
        <begin position="540"/>
        <end position="551"/>
    </location>
</feature>
<feature type="strand" evidence="5">
    <location>
        <begin position="557"/>
        <end position="564"/>
    </location>
</feature>
<feature type="helix" evidence="5">
    <location>
        <begin position="566"/>
        <end position="568"/>
    </location>
</feature>
<feature type="strand" evidence="5">
    <location>
        <begin position="579"/>
        <end position="585"/>
    </location>
</feature>
<dbReference type="EMBL" id="X73487">
    <property type="protein sequence ID" value="CAA51900.1"/>
    <property type="molecule type" value="Genomic_DNA"/>
</dbReference>
<dbReference type="PIR" id="S33951">
    <property type="entry name" value="S33951"/>
</dbReference>
<dbReference type="RefSeq" id="NP_040933.1">
    <property type="nucleotide sequence ID" value="NC_001460.1"/>
</dbReference>
<dbReference type="PDB" id="1KAC">
    <property type="method" value="X-ray"/>
    <property type="resolution" value="2.60 A"/>
    <property type="chains" value="A=403-587"/>
</dbReference>
<dbReference type="PDB" id="1NOB">
    <property type="method" value="X-ray"/>
    <property type="resolution" value="2.60 A"/>
    <property type="chains" value="A/B/C/D/E/F=403-587"/>
</dbReference>
<dbReference type="PDB" id="1P69">
    <property type="method" value="X-ray"/>
    <property type="resolution" value="3.10 A"/>
    <property type="chains" value="A=403-587"/>
</dbReference>
<dbReference type="PDB" id="1P6A">
    <property type="method" value="X-ray"/>
    <property type="resolution" value="2.90 A"/>
    <property type="chains" value="A=403-587"/>
</dbReference>
<dbReference type="PDBsum" id="1KAC"/>
<dbReference type="PDBsum" id="1NOB"/>
<dbReference type="PDBsum" id="1P69"/>
<dbReference type="PDBsum" id="1P6A"/>
<dbReference type="SMR" id="P36711"/>
<dbReference type="MINT" id="P36711"/>
<dbReference type="GeneID" id="1460847"/>
<dbReference type="KEGG" id="vg:1460847"/>
<dbReference type="EvolutionaryTrace" id="P36711"/>
<dbReference type="Proteomes" id="UP000004993">
    <property type="component" value="Genome"/>
</dbReference>
<dbReference type="GO" id="GO:0042025">
    <property type="term" value="C:host cell nucleus"/>
    <property type="evidence" value="ECO:0007669"/>
    <property type="project" value="UniProtKB-SubCell"/>
</dbReference>
<dbReference type="GO" id="GO:0019028">
    <property type="term" value="C:viral capsid"/>
    <property type="evidence" value="ECO:0007669"/>
    <property type="project" value="UniProtKB-KW"/>
</dbReference>
<dbReference type="GO" id="GO:0098671">
    <property type="term" value="P:adhesion receptor-mediated virion attachment to host cell"/>
    <property type="evidence" value="ECO:0007669"/>
    <property type="project" value="UniProtKB-KW"/>
</dbReference>
<dbReference type="GO" id="GO:0007155">
    <property type="term" value="P:cell adhesion"/>
    <property type="evidence" value="ECO:0007669"/>
    <property type="project" value="InterPro"/>
</dbReference>
<dbReference type="GO" id="GO:0046718">
    <property type="term" value="P:symbiont entry into host cell"/>
    <property type="evidence" value="ECO:0007669"/>
    <property type="project" value="UniProtKB-KW"/>
</dbReference>
<dbReference type="Gene3D" id="6.20.10.20">
    <property type="match status" value="2"/>
</dbReference>
<dbReference type="Gene3D" id="2.60.90.10">
    <property type="entry name" value="Adenovirus pIV-related, attachment domain"/>
    <property type="match status" value="1"/>
</dbReference>
<dbReference type="Gene3D" id="2.10.25.20">
    <property type="entry name" value="reovirus attachment protein sigma1, domain 1"/>
    <property type="match status" value="1"/>
</dbReference>
<dbReference type="InterPro" id="IPR000931">
    <property type="entry name" value="Adeno_fibre"/>
</dbReference>
<dbReference type="InterPro" id="IPR000978">
    <property type="entry name" value="Adeno_fibre_knob"/>
</dbReference>
<dbReference type="InterPro" id="IPR000939">
    <property type="entry name" value="Adenobir_fibre_prot_rpt/shaft"/>
</dbReference>
<dbReference type="InterPro" id="IPR008982">
    <property type="entry name" value="Adenovirus_pIV-like_att"/>
</dbReference>
<dbReference type="InterPro" id="IPR009013">
    <property type="entry name" value="Attachment_protein_shaft_sf"/>
</dbReference>
<dbReference type="Pfam" id="PF00541">
    <property type="entry name" value="Adeno_knob"/>
    <property type="match status" value="1"/>
</dbReference>
<dbReference type="Pfam" id="PF00608">
    <property type="entry name" value="Adeno_shaft"/>
    <property type="match status" value="6"/>
</dbReference>
<dbReference type="PRINTS" id="PR00307">
    <property type="entry name" value="ADENOVSFIBRE"/>
</dbReference>
<dbReference type="SUPFAM" id="SSF51225">
    <property type="entry name" value="Fibre shaft of virus attachment proteins"/>
    <property type="match status" value="5"/>
</dbReference>
<dbReference type="SUPFAM" id="SSF49835">
    <property type="entry name" value="Virus attachment protein globular domain"/>
    <property type="match status" value="1"/>
</dbReference>
<evidence type="ECO:0000250" key="1"/>
<evidence type="ECO:0000256" key="2">
    <source>
        <dbReference type="SAM" id="MobiDB-lite"/>
    </source>
</evidence>
<evidence type="ECO:0000269" key="3">
    <source>
    </source>
</evidence>
<evidence type="ECO:0000305" key="4"/>
<evidence type="ECO:0007829" key="5">
    <source>
        <dbReference type="PDB" id="1KAC"/>
    </source>
</evidence>
<evidence type="ECO:0007829" key="6">
    <source>
        <dbReference type="PDB" id="1NOB"/>
    </source>
</evidence>
<sequence length="587" mass="61699">MKRSRTQYAEETEENDDFNPVYPFDPFDTSDVPFVTPPFTSSNGLQEKPPGVLALNYKDPIVTENGTLTLKLGDGIKLNAQGQLTASNNINVLEPLTNTSQGLKLSWSAPLAVKASALTLNTRAPLTTTDESLALITAPPITVESSRLGLATIAPLSLDGGGNLGLNLSAPLDVSNNNLHLTTETPLVVNSSGALSVATADPISVRNNALTLPTADPLMVSSDGLGISVTSPITVINGSLALSTTAPLNSTGSTLSLSVANPLTISQDTLTVSTGNGLQVSGSQLVTRIGDGLTFDNGVMKVNVAGGMRTSGGRIILDVNYPFDASNNLSLRRGLGLIYNQSTNWNLTTDISTEKGLMFSGNQIALNAGQGLTFNNGQLRVKLGAGLIFDSNNNIALGSSSNTPYDPLTLWTTPDPPPNCSLIQELDAKLTLCLTKNGSIVNGIVSLVGVKGNLLNIQSTTTTVGVHLVFDEQGRLITSTPTALVPQASWGYRQGQSVSTNTVTNGLGFMPNVSAYPRPNASEAKSQMVSLTYLQGDTSKPITMKVAFNGITSLNGYSLTFMWSGLSNYINQPFSTPSCSFSYITQE</sequence>
<proteinExistence type="evidence at protein level"/>
<keyword id="KW-0002">3D-structure</keyword>
<keyword id="KW-0167">Capsid protein</keyword>
<keyword id="KW-1048">Host nucleus</keyword>
<keyword id="KW-0945">Host-virus interaction</keyword>
<keyword id="KW-0426">Late protein</keyword>
<keyword id="KW-1185">Reference proteome</keyword>
<keyword id="KW-1233">Viral attachment to host adhesion receptor</keyword>
<keyword id="KW-1161">Viral attachment to host cell</keyword>
<keyword id="KW-0946">Virion</keyword>
<keyword id="KW-1160">Virus entry into host cell</keyword>
<gene>
    <name type="ORF">L5</name>
</gene>
<reference key="1">
    <citation type="journal article" date="1994" name="J. Virol.">
        <title>Nucleotide sequence of human adenovirus type 12 DNA: comparative functional analysis.</title>
        <authorList>
            <person name="Sprengel J."/>
            <person name="Schmitz B."/>
            <person name="Heuss-Neitzel D."/>
            <person name="Zock C."/>
            <person name="Doerfler W."/>
        </authorList>
    </citation>
    <scope>NUCLEOTIDE SEQUENCE [LARGE SCALE GENOMIC DNA]</scope>
</reference>
<reference key="2">
    <citation type="journal article" date="1999" name="Science">
        <title>Structural analysis of the mechanism of adenovirus binding to its human cellular receptor, CAR.</title>
        <authorList>
            <person name="Bewley M.C."/>
            <person name="Springer K."/>
            <person name="Zhang Y.-B."/>
            <person name="Freimuth P."/>
            <person name="Flanagan J.M."/>
        </authorList>
    </citation>
    <scope>X-RAY CRYSTALLOGRAPHY (2.6 ANGSTROMS) OF 403-587 IN COMPLEX WITH CXADR</scope>
    <scope>MUTAGENESIS OF PRO-417; PRO-418; SER-421; GLU-425; LEU-426; GLY-550 AND ILE-551</scope>
</reference>
<reference key="3">
    <citation type="journal article" date="2005" name="J. Virol.">
        <title>Adenovirus receptors.</title>
        <authorList>
            <person name="Zhang Y."/>
            <person name="Bergelson J.M."/>
        </authorList>
    </citation>
    <scope>REVIEW</scope>
</reference>
<organism>
    <name type="scientific">Human adenovirus A serotype 12</name>
    <name type="common">HAdV-12</name>
    <name type="synonym">Human adenovirus 12</name>
    <dbReference type="NCBI Taxonomy" id="28282"/>
    <lineage>
        <taxon>Viruses</taxon>
        <taxon>Varidnaviria</taxon>
        <taxon>Bamfordvirae</taxon>
        <taxon>Preplasmiviricota</taxon>
        <taxon>Tectiliviricetes</taxon>
        <taxon>Rowavirales</taxon>
        <taxon>Adenoviridae</taxon>
        <taxon>Mastadenovirus</taxon>
        <taxon>Human mastadenovirus A</taxon>
    </lineage>
</organism>
<name>SPIKE_ADE12</name>
<accession>P36711</accession>